<reference key="1">
    <citation type="submission" date="2008-10" db="EMBL/GenBank/DDBJ databases">
        <title>The complete genome sequence of Helicobacter pylori strain P12.</title>
        <authorList>
            <person name="Fischer W."/>
            <person name="Windhager L."/>
            <person name="Karnholz A."/>
            <person name="Zeiller M."/>
            <person name="Zimmer R."/>
            <person name="Haas R."/>
        </authorList>
    </citation>
    <scope>NUCLEOTIDE SEQUENCE [LARGE SCALE GENOMIC DNA]</scope>
    <source>
        <strain>P12</strain>
    </source>
</reference>
<accession>B6JPL1</accession>
<evidence type="ECO:0000255" key="1">
    <source>
        <dbReference type="HAMAP-Rule" id="MF_01151"/>
    </source>
</evidence>
<proteinExistence type="inferred from homology"/>
<feature type="chain" id="PRO_1000137575" description="Protein GrpE">
    <location>
        <begin position="1"/>
        <end position="191"/>
    </location>
</feature>
<comment type="function">
    <text evidence="1">Participates actively in the response to hyperosmotic and heat shock by preventing the aggregation of stress-denatured proteins, in association with DnaK and GrpE. It is the nucleotide exchange factor for DnaK and may function as a thermosensor. Unfolded proteins bind initially to DnaJ; upon interaction with the DnaJ-bound protein, DnaK hydrolyzes its bound ATP, resulting in the formation of a stable complex. GrpE releases ADP from DnaK; ATP binding to DnaK triggers the release of the substrate protein, thus completing the reaction cycle. Several rounds of ATP-dependent interactions between DnaJ, DnaK and GrpE are required for fully efficient folding.</text>
</comment>
<comment type="subunit">
    <text evidence="1">Homodimer.</text>
</comment>
<comment type="subcellular location">
    <subcellularLocation>
        <location evidence="1">Cytoplasm</location>
    </subcellularLocation>
</comment>
<comment type="similarity">
    <text evidence="1">Belongs to the GrpE family.</text>
</comment>
<name>GRPE_HELP2</name>
<protein>
    <recommendedName>
        <fullName evidence="1">Protein GrpE</fullName>
    </recommendedName>
    <alternativeName>
        <fullName evidence="1">HSP-70 cofactor</fullName>
    </alternativeName>
</protein>
<dbReference type="EMBL" id="CP001217">
    <property type="protein sequence ID" value="ACJ07272.1"/>
    <property type="molecule type" value="Genomic_DNA"/>
</dbReference>
<dbReference type="SMR" id="B6JPL1"/>
<dbReference type="KEGG" id="hpp:HPP12_0112"/>
<dbReference type="HOGENOM" id="CLU_057217_6_3_7"/>
<dbReference type="Proteomes" id="UP000008198">
    <property type="component" value="Chromosome"/>
</dbReference>
<dbReference type="GO" id="GO:0005829">
    <property type="term" value="C:cytosol"/>
    <property type="evidence" value="ECO:0007669"/>
    <property type="project" value="TreeGrafter"/>
</dbReference>
<dbReference type="GO" id="GO:0000774">
    <property type="term" value="F:adenyl-nucleotide exchange factor activity"/>
    <property type="evidence" value="ECO:0007669"/>
    <property type="project" value="InterPro"/>
</dbReference>
<dbReference type="GO" id="GO:0042803">
    <property type="term" value="F:protein homodimerization activity"/>
    <property type="evidence" value="ECO:0007669"/>
    <property type="project" value="InterPro"/>
</dbReference>
<dbReference type="GO" id="GO:0051087">
    <property type="term" value="F:protein-folding chaperone binding"/>
    <property type="evidence" value="ECO:0007669"/>
    <property type="project" value="InterPro"/>
</dbReference>
<dbReference type="GO" id="GO:0051082">
    <property type="term" value="F:unfolded protein binding"/>
    <property type="evidence" value="ECO:0007669"/>
    <property type="project" value="TreeGrafter"/>
</dbReference>
<dbReference type="GO" id="GO:0006457">
    <property type="term" value="P:protein folding"/>
    <property type="evidence" value="ECO:0007669"/>
    <property type="project" value="InterPro"/>
</dbReference>
<dbReference type="CDD" id="cd00446">
    <property type="entry name" value="GrpE"/>
    <property type="match status" value="1"/>
</dbReference>
<dbReference type="FunFam" id="2.30.22.10:FF:000001">
    <property type="entry name" value="Protein GrpE"/>
    <property type="match status" value="1"/>
</dbReference>
<dbReference type="FunFam" id="3.90.20.20:FF:000023">
    <property type="entry name" value="Protein GrpE"/>
    <property type="match status" value="1"/>
</dbReference>
<dbReference type="Gene3D" id="3.90.20.20">
    <property type="match status" value="1"/>
</dbReference>
<dbReference type="Gene3D" id="2.30.22.10">
    <property type="entry name" value="Head domain of nucleotide exchange factor GrpE"/>
    <property type="match status" value="1"/>
</dbReference>
<dbReference type="HAMAP" id="MF_01151">
    <property type="entry name" value="GrpE"/>
    <property type="match status" value="1"/>
</dbReference>
<dbReference type="InterPro" id="IPR000740">
    <property type="entry name" value="GrpE"/>
</dbReference>
<dbReference type="InterPro" id="IPR013805">
    <property type="entry name" value="GrpE_coiled_coil"/>
</dbReference>
<dbReference type="InterPro" id="IPR009012">
    <property type="entry name" value="GrpE_head"/>
</dbReference>
<dbReference type="NCBIfam" id="NF010738">
    <property type="entry name" value="PRK14140.1"/>
    <property type="match status" value="1"/>
</dbReference>
<dbReference type="NCBIfam" id="NF010747">
    <property type="entry name" value="PRK14149.1"/>
    <property type="match status" value="1"/>
</dbReference>
<dbReference type="PANTHER" id="PTHR21237">
    <property type="entry name" value="GRPE PROTEIN"/>
    <property type="match status" value="1"/>
</dbReference>
<dbReference type="PANTHER" id="PTHR21237:SF23">
    <property type="entry name" value="GRPE PROTEIN HOMOLOG, MITOCHONDRIAL"/>
    <property type="match status" value="1"/>
</dbReference>
<dbReference type="Pfam" id="PF01025">
    <property type="entry name" value="GrpE"/>
    <property type="match status" value="1"/>
</dbReference>
<dbReference type="PRINTS" id="PR00773">
    <property type="entry name" value="GRPEPROTEIN"/>
</dbReference>
<dbReference type="SUPFAM" id="SSF58014">
    <property type="entry name" value="Coiled-coil domain of nucleotide exchange factor GrpE"/>
    <property type="match status" value="1"/>
</dbReference>
<dbReference type="SUPFAM" id="SSF51064">
    <property type="entry name" value="Head domain of nucleotide exchange factor GrpE"/>
    <property type="match status" value="1"/>
</dbReference>
<dbReference type="PROSITE" id="PS01071">
    <property type="entry name" value="GRPE"/>
    <property type="match status" value="1"/>
</dbReference>
<gene>
    <name evidence="1" type="primary">grpE</name>
    <name type="ordered locus">HPP12_0112</name>
</gene>
<keyword id="KW-0143">Chaperone</keyword>
<keyword id="KW-0963">Cytoplasm</keyword>
<keyword id="KW-0346">Stress response</keyword>
<organism>
    <name type="scientific">Helicobacter pylori (strain P12)</name>
    <dbReference type="NCBI Taxonomy" id="570508"/>
    <lineage>
        <taxon>Bacteria</taxon>
        <taxon>Pseudomonadati</taxon>
        <taxon>Campylobacterota</taxon>
        <taxon>Epsilonproteobacteria</taxon>
        <taxon>Campylobacterales</taxon>
        <taxon>Helicobacteraceae</taxon>
        <taxon>Helicobacter</taxon>
    </lineage>
</organism>
<sequence>MKDEHNQEHDHLSQKEPEFCEKACACKEQQNEEMQEASEKECEIKEDFELKYKEMHEKYLRVHADFENVKKRLERDKSMALEYAYEKIALDLLPVIDALLGAYKSAAEVDKESALTKGLELTMEKLHEVLARHGIEGIECLEEFDPNFHNAIMQVKSEEKENGKIVQVLQQGYKYKGRVLRPAMVSIAKND</sequence>